<gene>
    <name evidence="9 11" type="primary">KCNK13</name>
</gene>
<evidence type="ECO:0000250" key="1">
    <source>
        <dbReference type="UniProtKB" id="P57789"/>
    </source>
</evidence>
<evidence type="ECO:0000250" key="2">
    <source>
        <dbReference type="UniProtKB" id="Q8R1P5"/>
    </source>
</evidence>
<evidence type="ECO:0000255" key="3"/>
<evidence type="ECO:0000269" key="4">
    <source>
    </source>
</evidence>
<evidence type="ECO:0000269" key="5">
    <source>
    </source>
</evidence>
<evidence type="ECO:0000269" key="6">
    <source>
    </source>
</evidence>
<evidence type="ECO:0000269" key="7">
    <source>
    </source>
</evidence>
<evidence type="ECO:0000303" key="8">
    <source>
    </source>
</evidence>
<evidence type="ECO:0000303" key="9">
    <source>
    </source>
</evidence>
<evidence type="ECO:0000305" key="10"/>
<evidence type="ECO:0000312" key="11">
    <source>
        <dbReference type="HGNC" id="HGNC:6275"/>
    </source>
</evidence>
<feature type="chain" id="PRO_0000101762" description="Potassium channel subfamily K member 13">
    <location>
        <begin position="1"/>
        <end position="408"/>
    </location>
</feature>
<feature type="topological domain" description="Cytoplasmic" evidence="3">
    <location>
        <begin position="1"/>
        <end position="19"/>
    </location>
</feature>
<feature type="transmembrane region" description="Helical" evidence="3">
    <location>
        <begin position="20"/>
        <end position="40"/>
    </location>
</feature>
<feature type="intramembrane region" description="Pore-forming; Name=Pore-forming 1" evidence="3">
    <location>
        <begin position="95"/>
        <end position="115"/>
    </location>
</feature>
<feature type="transmembrane region" description="Helical" evidence="3">
    <location>
        <begin position="125"/>
        <end position="145"/>
    </location>
</feature>
<feature type="topological domain" description="Cytoplasmic" evidence="3">
    <location>
        <begin position="146"/>
        <end position="193"/>
    </location>
</feature>
<feature type="transmembrane region" description="Helical" evidence="3">
    <location>
        <begin position="194"/>
        <end position="214"/>
    </location>
</feature>
<feature type="intramembrane region" description="Pore-forming; Name=Pore-forming 2" evidence="3">
    <location>
        <begin position="224"/>
        <end position="244"/>
    </location>
</feature>
<feature type="transmembrane region" description="Helical" evidence="3">
    <location>
        <begin position="263"/>
        <end position="283"/>
    </location>
</feature>
<feature type="topological domain" description="Cytoplasmic" evidence="3">
    <location>
        <begin position="284"/>
        <end position="408"/>
    </location>
</feature>
<feature type="region of interest" description="Selectivity filter 1" evidence="1">
    <location>
        <begin position="110"/>
        <end position="115"/>
    </location>
</feature>
<feature type="region of interest" description="Selectivity filter 2" evidence="1">
    <location>
        <begin position="237"/>
        <end position="242"/>
    </location>
</feature>
<feature type="binding site" evidence="1">
    <location>
        <position position="110"/>
    </location>
    <ligand>
        <name>K(+)</name>
        <dbReference type="ChEBI" id="CHEBI:29103"/>
        <label>1</label>
    </ligand>
</feature>
<feature type="binding site" evidence="1">
    <location>
        <position position="110"/>
    </location>
    <ligand>
        <name>K(+)</name>
        <dbReference type="ChEBI" id="CHEBI:29103"/>
        <label>4</label>
    </ligand>
</feature>
<feature type="binding site" evidence="1">
    <location>
        <position position="111"/>
    </location>
    <ligand>
        <name>K(+)</name>
        <dbReference type="ChEBI" id="CHEBI:29103"/>
        <label>1</label>
    </ligand>
</feature>
<feature type="binding site" evidence="1">
    <location>
        <position position="111"/>
    </location>
    <ligand>
        <name>K(+)</name>
        <dbReference type="ChEBI" id="CHEBI:29103"/>
        <label>2</label>
    </ligand>
</feature>
<feature type="binding site" evidence="1">
    <location>
        <position position="112"/>
    </location>
    <ligand>
        <name>K(+)</name>
        <dbReference type="ChEBI" id="CHEBI:29103"/>
        <label>2</label>
    </ligand>
</feature>
<feature type="binding site" evidence="1">
    <location>
        <position position="112"/>
    </location>
    <ligand>
        <name>K(+)</name>
        <dbReference type="ChEBI" id="CHEBI:29103"/>
        <label>3</label>
    </ligand>
</feature>
<feature type="binding site" evidence="1">
    <location>
        <position position="237"/>
    </location>
    <ligand>
        <name>K(+)</name>
        <dbReference type="ChEBI" id="CHEBI:29103"/>
        <label>1</label>
    </ligand>
</feature>
<feature type="binding site" evidence="1">
    <location>
        <position position="237"/>
    </location>
    <ligand>
        <name>K(+)</name>
        <dbReference type="ChEBI" id="CHEBI:29103"/>
        <label>4</label>
    </ligand>
</feature>
<feature type="binding site" evidence="1">
    <location>
        <position position="238"/>
    </location>
    <ligand>
        <name>K(+)</name>
        <dbReference type="ChEBI" id="CHEBI:29103"/>
        <label>1</label>
    </ligand>
</feature>
<feature type="binding site" evidence="1">
    <location>
        <position position="238"/>
    </location>
    <ligand>
        <name>K(+)</name>
        <dbReference type="ChEBI" id="CHEBI:29103"/>
        <label>2</label>
    </ligand>
</feature>
<feature type="binding site" evidence="1">
    <location>
        <position position="239"/>
    </location>
    <ligand>
        <name>K(+)</name>
        <dbReference type="ChEBI" id="CHEBI:29103"/>
        <label>2</label>
    </ligand>
</feature>
<feature type="binding site" evidence="1">
    <location>
        <position position="239"/>
    </location>
    <ligand>
        <name>K(+)</name>
        <dbReference type="ChEBI" id="CHEBI:29103"/>
        <label>3</label>
    </ligand>
</feature>
<feature type="binding site" evidence="1">
    <location>
        <position position="240"/>
    </location>
    <ligand>
        <name>K(+)</name>
        <dbReference type="ChEBI" id="CHEBI:29103"/>
        <label>3</label>
    </ligand>
</feature>
<feature type="glycosylation site" description="N-linked (GlcNAc...) asparagine" evidence="3">
    <location>
        <position position="59"/>
    </location>
</feature>
<feature type="glycosylation site" description="N-linked (GlcNAc...) asparagine" evidence="3">
    <location>
        <position position="65"/>
    </location>
</feature>
<feature type="sequence variant" id="VAR_052429" description="In dbSNP:rs3814848.">
    <original>G</original>
    <variation>R</variation>
    <location>
        <position position="305"/>
    </location>
</feature>
<feature type="sequence variant" id="VAR_034052" description="In dbSNP:rs35909577.">
    <original>G</original>
    <variation>A</variation>
    <location>
        <position position="389"/>
    </location>
</feature>
<feature type="mutagenesis site" description="Acts as a dominant negative when it assembles with wild-type KCNK13 or KCNK12 subunits, abolishing K(+) flux." evidence="5">
    <original>G</original>
    <variation>E</variation>
    <location>
        <position position="112"/>
    </location>
</feature>
<feature type="mutagenesis site" description="Increases channel basal activity. Increases the current amplitude. Confers nonlinear I-V relationship, with currents that saturate upon strong membrane depolarization; when associated with D-139. Does not affect channel ion selectivity, pH sensitivity nor inhibition by halothane." evidence="4">
    <original>S</original>
    <variation>P</variation>
    <location>
        <position position="136"/>
    </location>
</feature>
<feature type="mutagenesis site" description="Increases channel basal activity. Increases the current amplitude. Confers nonlinear I-V relationship, with currents that saturate upon strong membrane depolarization; when associated with P-136." evidence="4">
    <original>I</original>
    <variation>D</variation>
    <location>
        <position position="139"/>
    </location>
</feature>
<feature type="sequence conflict" description="In Ref. 1; AAG32314." evidence="10" ref="1">
    <original>N</original>
    <variation>D</variation>
    <location>
        <position position="288"/>
    </location>
</feature>
<dbReference type="EMBL" id="AF287303">
    <property type="protein sequence ID" value="AAG32314.1"/>
    <property type="molecule type" value="mRNA"/>
</dbReference>
<dbReference type="EMBL" id="EU978942">
    <property type="protein sequence ID" value="ACH86101.1"/>
    <property type="molecule type" value="mRNA"/>
</dbReference>
<dbReference type="EMBL" id="CH471061">
    <property type="protein sequence ID" value="EAW81417.1"/>
    <property type="molecule type" value="Genomic_DNA"/>
</dbReference>
<dbReference type="EMBL" id="BC012779">
    <property type="protein sequence ID" value="AAH12779.1"/>
    <property type="molecule type" value="mRNA"/>
</dbReference>
<dbReference type="CCDS" id="CCDS9889.1"/>
<dbReference type="RefSeq" id="NP_071337.2">
    <property type="nucleotide sequence ID" value="NM_022054.3"/>
</dbReference>
<dbReference type="PDB" id="9BSN">
    <property type="method" value="EM"/>
    <property type="resolution" value="2.70 A"/>
    <property type="chains" value="A/U=1-350"/>
</dbReference>
<dbReference type="PDB" id="9BWS">
    <property type="method" value="EM"/>
    <property type="resolution" value="2.39 A"/>
    <property type="chains" value="A/U=1-350"/>
</dbReference>
<dbReference type="PDB" id="9BYI">
    <property type="method" value="EM"/>
    <property type="resolution" value="2.95 A"/>
    <property type="chains" value="A/U=1-350"/>
</dbReference>
<dbReference type="PDB" id="9C07">
    <property type="method" value="EM"/>
    <property type="resolution" value="2.73 A"/>
    <property type="chains" value="A/U=1-350"/>
</dbReference>
<dbReference type="PDB" id="9C09">
    <property type="method" value="EM"/>
    <property type="resolution" value="2.36 A"/>
    <property type="chains" value="A/U=1-350"/>
</dbReference>
<dbReference type="PDB" id="9FT7">
    <property type="method" value="EM"/>
    <property type="resolution" value="3.16 A"/>
    <property type="chains" value="A/B=9-297"/>
</dbReference>
<dbReference type="PDBsum" id="9BSN"/>
<dbReference type="PDBsum" id="9BWS"/>
<dbReference type="PDBsum" id="9BYI"/>
<dbReference type="PDBsum" id="9C07"/>
<dbReference type="PDBsum" id="9C09"/>
<dbReference type="PDBsum" id="9FT7"/>
<dbReference type="EMDB" id="EMD-44870"/>
<dbReference type="EMDB" id="EMD-44978"/>
<dbReference type="EMDB" id="EMD-45034"/>
<dbReference type="EMDB" id="EMD-45075"/>
<dbReference type="EMDB" id="EMD-45077"/>
<dbReference type="EMDB" id="EMD-50741"/>
<dbReference type="SMR" id="Q9HB14"/>
<dbReference type="BioGRID" id="121171">
    <property type="interactions" value="2"/>
</dbReference>
<dbReference type="FunCoup" id="Q9HB14">
    <property type="interactions" value="384"/>
</dbReference>
<dbReference type="STRING" id="9606.ENSP00000282146"/>
<dbReference type="ChEMBL" id="CHEMBL4523461"/>
<dbReference type="GuidetoPHARMACOLOGY" id="523"/>
<dbReference type="GlyCosmos" id="Q9HB14">
    <property type="glycosylation" value="2 sites, No reported glycans"/>
</dbReference>
<dbReference type="GlyGen" id="Q9HB14">
    <property type="glycosylation" value="2 sites"/>
</dbReference>
<dbReference type="iPTMnet" id="Q9HB14"/>
<dbReference type="PhosphoSitePlus" id="Q9HB14"/>
<dbReference type="BioMuta" id="KCNK13"/>
<dbReference type="DMDM" id="24636284"/>
<dbReference type="MassIVE" id="Q9HB14"/>
<dbReference type="PaxDb" id="9606-ENSP00000282146"/>
<dbReference type="PeptideAtlas" id="Q9HB14"/>
<dbReference type="Antibodypedia" id="13480">
    <property type="antibodies" value="122 antibodies from 27 providers"/>
</dbReference>
<dbReference type="DNASU" id="56659"/>
<dbReference type="Ensembl" id="ENST00000282146.5">
    <property type="protein sequence ID" value="ENSP00000282146.4"/>
    <property type="gene ID" value="ENSG00000152315.5"/>
</dbReference>
<dbReference type="GeneID" id="56659"/>
<dbReference type="KEGG" id="hsa:56659"/>
<dbReference type="MANE-Select" id="ENST00000282146.5">
    <property type="protein sequence ID" value="ENSP00000282146.4"/>
    <property type="RefSeq nucleotide sequence ID" value="NM_022054.4"/>
    <property type="RefSeq protein sequence ID" value="NP_071337.2"/>
</dbReference>
<dbReference type="UCSC" id="uc001xye.2">
    <property type="organism name" value="human"/>
</dbReference>
<dbReference type="AGR" id="HGNC:6275"/>
<dbReference type="CTD" id="56659"/>
<dbReference type="DisGeNET" id="56659"/>
<dbReference type="GeneCards" id="KCNK13"/>
<dbReference type="HGNC" id="HGNC:6275">
    <property type="gene designation" value="KCNK13"/>
</dbReference>
<dbReference type="HPA" id="ENSG00000152315">
    <property type="expression patterns" value="Tissue enhanced (choroid plexus, parathyroid gland, testis)"/>
</dbReference>
<dbReference type="MIM" id="607367">
    <property type="type" value="gene"/>
</dbReference>
<dbReference type="neXtProt" id="NX_Q9HB14"/>
<dbReference type="OpenTargets" id="ENSG00000152315"/>
<dbReference type="PharmGKB" id="PA30055"/>
<dbReference type="VEuPathDB" id="HostDB:ENSG00000152315"/>
<dbReference type="eggNOG" id="KOG4404">
    <property type="taxonomic scope" value="Eukaryota"/>
</dbReference>
<dbReference type="GeneTree" id="ENSGT00940000157960"/>
<dbReference type="HOGENOM" id="CLU_022504_3_1_1"/>
<dbReference type="InParanoid" id="Q9HB14"/>
<dbReference type="OMA" id="NFTRRHN"/>
<dbReference type="OrthoDB" id="297496at2759"/>
<dbReference type="PAN-GO" id="Q9HB14">
    <property type="GO annotations" value="5 GO annotations based on evolutionary models"/>
</dbReference>
<dbReference type="PhylomeDB" id="Q9HB14"/>
<dbReference type="TreeFam" id="TF313947"/>
<dbReference type="PathwayCommons" id="Q9HB14"/>
<dbReference type="Reactome" id="R-HSA-1299287">
    <property type="pathway name" value="Tandem pore domain halothane-inhibited K+ channel (THIK)"/>
</dbReference>
<dbReference type="Reactome" id="R-HSA-5576886">
    <property type="pathway name" value="Phase 4 - resting membrane potential"/>
</dbReference>
<dbReference type="BioGRID-ORCS" id="56659">
    <property type="hits" value="13 hits in 1147 CRISPR screens"/>
</dbReference>
<dbReference type="ChiTaRS" id="KCNK13">
    <property type="organism name" value="human"/>
</dbReference>
<dbReference type="GeneWiki" id="KCNK13"/>
<dbReference type="GenomeRNAi" id="56659"/>
<dbReference type="Pharos" id="Q9HB14">
    <property type="development level" value="Tbio"/>
</dbReference>
<dbReference type="PRO" id="PR:Q9HB14"/>
<dbReference type="Proteomes" id="UP000005640">
    <property type="component" value="Chromosome 14"/>
</dbReference>
<dbReference type="RNAct" id="Q9HB14">
    <property type="molecule type" value="protein"/>
</dbReference>
<dbReference type="Bgee" id="ENSG00000152315">
    <property type="expression patterns" value="Expressed in right testis and 97 other cell types or tissues"/>
</dbReference>
<dbReference type="GO" id="GO:0034702">
    <property type="term" value="C:monoatomic ion channel complex"/>
    <property type="evidence" value="ECO:0007669"/>
    <property type="project" value="UniProtKB-KW"/>
</dbReference>
<dbReference type="GO" id="GO:0005886">
    <property type="term" value="C:plasma membrane"/>
    <property type="evidence" value="ECO:0000314"/>
    <property type="project" value="UniProtKB"/>
</dbReference>
<dbReference type="GO" id="GO:0042802">
    <property type="term" value="F:identical protein binding"/>
    <property type="evidence" value="ECO:0000314"/>
    <property type="project" value="UniProtKB"/>
</dbReference>
<dbReference type="GO" id="GO:0046872">
    <property type="term" value="F:metal ion binding"/>
    <property type="evidence" value="ECO:0007669"/>
    <property type="project" value="UniProtKB-KW"/>
</dbReference>
<dbReference type="GO" id="GO:0015271">
    <property type="term" value="F:outward rectifier potassium channel activity"/>
    <property type="evidence" value="ECO:0000318"/>
    <property type="project" value="GO_Central"/>
</dbReference>
<dbReference type="GO" id="GO:0005267">
    <property type="term" value="F:potassium channel activity"/>
    <property type="evidence" value="ECO:0000314"/>
    <property type="project" value="UniProtKB"/>
</dbReference>
<dbReference type="GO" id="GO:0022841">
    <property type="term" value="F:potassium ion leak channel activity"/>
    <property type="evidence" value="ECO:0000318"/>
    <property type="project" value="GO_Central"/>
</dbReference>
<dbReference type="GO" id="GO:0046982">
    <property type="term" value="F:protein heterodimerization activity"/>
    <property type="evidence" value="ECO:0000314"/>
    <property type="project" value="UniProtKB"/>
</dbReference>
<dbReference type="GO" id="GO:0071805">
    <property type="term" value="P:potassium ion transmembrane transport"/>
    <property type="evidence" value="ECO:0000318"/>
    <property type="project" value="GO_Central"/>
</dbReference>
<dbReference type="GO" id="GO:1905810">
    <property type="term" value="P:regulation of excitatory synapse pruning"/>
    <property type="evidence" value="ECO:0000250"/>
    <property type="project" value="UniProtKB"/>
</dbReference>
<dbReference type="GO" id="GO:1900225">
    <property type="term" value="P:regulation of NLRP3 inflammasome complex assembly"/>
    <property type="evidence" value="ECO:0000250"/>
    <property type="project" value="UniProtKB"/>
</dbReference>
<dbReference type="GO" id="GO:0060075">
    <property type="term" value="P:regulation of resting membrane potential"/>
    <property type="evidence" value="ECO:0000250"/>
    <property type="project" value="UniProtKB"/>
</dbReference>
<dbReference type="FunFam" id="1.10.287.70:FF:000070">
    <property type="entry name" value="Potassium channel, subfamily K, member 12 like"/>
    <property type="match status" value="1"/>
</dbReference>
<dbReference type="Gene3D" id="1.10.287.70">
    <property type="match status" value="1"/>
</dbReference>
<dbReference type="InterPro" id="IPR003280">
    <property type="entry name" value="2pore_dom_K_chnl"/>
</dbReference>
<dbReference type="InterPro" id="IPR005410">
    <property type="entry name" value="2pore_dom_K_chnl_THIK"/>
</dbReference>
<dbReference type="InterPro" id="IPR013099">
    <property type="entry name" value="K_chnl_dom"/>
</dbReference>
<dbReference type="PANTHER" id="PTHR11003:SF57">
    <property type="entry name" value="POTASSIUM CHANNEL SUBFAMILY K MEMBER 13"/>
    <property type="match status" value="1"/>
</dbReference>
<dbReference type="PANTHER" id="PTHR11003">
    <property type="entry name" value="POTASSIUM CHANNEL, SUBFAMILY K"/>
    <property type="match status" value="1"/>
</dbReference>
<dbReference type="Pfam" id="PF07885">
    <property type="entry name" value="Ion_trans_2"/>
    <property type="match status" value="2"/>
</dbReference>
<dbReference type="PRINTS" id="PR01333">
    <property type="entry name" value="2POREKCHANEL"/>
</dbReference>
<dbReference type="PRINTS" id="PR01588">
    <property type="entry name" value="THIKCHANNEL"/>
</dbReference>
<dbReference type="SUPFAM" id="SSF81324">
    <property type="entry name" value="Voltage-gated potassium channels"/>
    <property type="match status" value="2"/>
</dbReference>
<keyword id="KW-0002">3D-structure</keyword>
<keyword id="KW-1003">Cell membrane</keyword>
<keyword id="KW-0325">Glycoprotein</keyword>
<keyword id="KW-0407">Ion channel</keyword>
<keyword id="KW-0406">Ion transport</keyword>
<keyword id="KW-0472">Membrane</keyword>
<keyword id="KW-0479">Metal-binding</keyword>
<keyword id="KW-0630">Potassium</keyword>
<keyword id="KW-0631">Potassium channel</keyword>
<keyword id="KW-0633">Potassium transport</keyword>
<keyword id="KW-1267">Proteomics identification</keyword>
<keyword id="KW-1185">Reference proteome</keyword>
<keyword id="KW-0812">Transmembrane</keyword>
<keyword id="KW-1133">Transmembrane helix</keyword>
<keyword id="KW-0813">Transport</keyword>
<keyword id="KW-0851">Voltage-gated channel</keyword>
<proteinExistence type="evidence at protein level"/>
<accession>Q9HB14</accession>
<accession>B5TJL8</accession>
<accession>Q96E79</accession>
<protein>
    <recommendedName>
        <fullName>Potassium channel subfamily K member 13</fullName>
    </recommendedName>
    <alternativeName>
        <fullName evidence="8">Tandem pore domain halothane-inhibited potassium channel 1</fullName>
        <shortName evidence="8">THIK-1</shortName>
    </alternativeName>
</protein>
<comment type="function">
    <text evidence="2 4 5 6 7">K(+) channel that conducts outward rectifying tonic currents potentiated by purinergic signals (PubMed:24163367, PubMed:25148687, PubMed:30472253, PubMed:38409076). Homo- and heterodimerizes to form functional channels with distinct regulatory and gating properties (PubMed:25148687). Contributes most of K(+) currents at the plasma membrane of resting microglia. Maintains a depolarized membrane potential required for proper ramified microglia morphology and phagocytosis, selectively mediating microglial pruning of presynaptic compartments at hippocampal excitatory synapses (PubMed:38409076). Upon local release of ATP caused by neuronal injury or infection, it is potentiated by P2RY12 and P2RX7 receptor signaling and contributes to ATP-triggered K(+) efflux underlying microglial NLRP3 inflammasome assembly and IL1B release (By similarity) (PubMed:38409076).</text>
</comment>
<comment type="catalytic activity">
    <reaction evidence="4 5 6 7">
        <text>K(+)(in) = K(+)(out)</text>
        <dbReference type="Rhea" id="RHEA:29463"/>
        <dbReference type="ChEBI" id="CHEBI:29103"/>
    </reaction>
</comment>
<comment type="activity regulation">
    <text evidence="4 6">The channel conductance is activated by arachidonic acid and inhibited by Ba(2+) ions, volatile anesthetics such as halothane and antiarrhythmic drugs mexiletine and lidocaine. Insensitive to extracellular pH change.</text>
</comment>
<comment type="subunit">
    <text evidence="5">Homodimer. Heterodimer with KCNK12.</text>
</comment>
<comment type="subcellular location">
    <subcellularLocation>
        <location evidence="4 5">Cell membrane</location>
        <topology evidence="3">Multi-pass membrane protein</topology>
    </subcellularLocation>
</comment>
<comment type="tissue specificity">
    <text evidence="7">Expressed in microglia (at protein level).</text>
</comment>
<comment type="domain">
    <text evidence="1">Each subunit contributes two pore-forming domains 1 and 2 which assemble to form a single pore with M2 and M4 transmembrane helices lining the central cavity and M1 and M3 facing the lipid bilayer. The transmembrane helices are bridged by the selectivity filters 1 and 2 that coordinate the permeant ions. Up to four ions can simultaneously occupy the selectivity filter and at least two elementary charges must translocate across the filter to convert it into the open conformation.</text>
</comment>
<comment type="similarity">
    <text evidence="10">Belongs to the two pore domain potassium channel (TC 1.A.1.8) family.</text>
</comment>
<organism>
    <name type="scientific">Homo sapiens</name>
    <name type="common">Human</name>
    <dbReference type="NCBI Taxonomy" id="9606"/>
    <lineage>
        <taxon>Eukaryota</taxon>
        <taxon>Metazoa</taxon>
        <taxon>Chordata</taxon>
        <taxon>Craniata</taxon>
        <taxon>Vertebrata</taxon>
        <taxon>Euteleostomi</taxon>
        <taxon>Mammalia</taxon>
        <taxon>Eutheria</taxon>
        <taxon>Euarchontoglires</taxon>
        <taxon>Primates</taxon>
        <taxon>Haplorrhini</taxon>
        <taxon>Catarrhini</taxon>
        <taxon>Hominidae</taxon>
        <taxon>Homo</taxon>
    </lineage>
</organism>
<sequence>MAGRGFSWGPGHLNEDNARFLLLAALIVLYLLGGAAVFSALELAHERQAKQRWEERLANFSRGHNLSRDELRGFLRHYEEATRAGIRVDNVRPRWDFTGAFYFVGTVVSTIGFGMTTPATVGGKIFLIFYGLVGCSSTILFFNLFLERLITIIAYIMKSCHQRQLRRRGALPQESLKDAGQCEVDSLAGWKPSVYYVMLILCTASILISCCASAMYTPIEGWSYFDSLYFCFVAFSTIGFGDLVSSQNAHYESQGLYRFANFVFILMGVCCIYSLFNVISILIKQSLNWILRKMDSGCCPQCQRGLLRSRRNVVMPGSVRNRCNISIETDGVAESDTDGRRLSGEMISMKDLLAANKASLAILQKQLSEMANGCPHQTSTLARDNEFSGGVGAFAIMNNRLAETSGDR</sequence>
<reference key="1">
    <citation type="journal article" date="2001" name="J. Biol. Chem.">
        <title>THIK-1 and THIK-2, a novel subfamily of tandem pore domain K+ channels.</title>
        <authorList>
            <person name="Rajan S."/>
            <person name="Wischmeyer E."/>
            <person name="Karschin C."/>
            <person name="Preisig-Mueller R."/>
            <person name="Grzeschik K.-H."/>
            <person name="Daut J."/>
            <person name="Karschin A."/>
            <person name="Derst C."/>
        </authorList>
    </citation>
    <scope>NUCLEOTIDE SEQUENCE [MRNA]</scope>
</reference>
<reference key="2">
    <citation type="journal article" date="2008" name="Br. J. Pharmacol.">
        <title>Regulation of two-pore-domain (K2P) potassium leak channels by the tyrosine kinase inhibitor genistein.</title>
        <authorList>
            <person name="Gierten J."/>
            <person name="Ficker E."/>
            <person name="Bloehs R."/>
            <person name="Schlomer K."/>
            <person name="Kathofer S."/>
            <person name="Scholz E."/>
            <person name="Zitron E."/>
            <person name="Kiesecker C."/>
            <person name="Bauer A."/>
            <person name="Becker R."/>
            <person name="Katus H.A."/>
            <person name="Karle C.A."/>
            <person name="Thomas D."/>
        </authorList>
    </citation>
    <scope>NUCLEOTIDE SEQUENCE [MRNA]</scope>
    <source>
        <tissue>Brain</tissue>
    </source>
</reference>
<reference key="3">
    <citation type="submission" date="2005-07" db="EMBL/GenBank/DDBJ databases">
        <authorList>
            <person name="Mural R.J."/>
            <person name="Istrail S."/>
            <person name="Sutton G."/>
            <person name="Florea L."/>
            <person name="Halpern A.L."/>
            <person name="Mobarry C.M."/>
            <person name="Lippert R."/>
            <person name="Walenz B."/>
            <person name="Shatkay H."/>
            <person name="Dew I."/>
            <person name="Miller J.R."/>
            <person name="Flanigan M.J."/>
            <person name="Edwards N.J."/>
            <person name="Bolanos R."/>
            <person name="Fasulo D."/>
            <person name="Halldorsson B.V."/>
            <person name="Hannenhalli S."/>
            <person name="Turner R."/>
            <person name="Yooseph S."/>
            <person name="Lu F."/>
            <person name="Nusskern D.R."/>
            <person name="Shue B.C."/>
            <person name="Zheng X.H."/>
            <person name="Zhong F."/>
            <person name="Delcher A.L."/>
            <person name="Huson D.H."/>
            <person name="Kravitz S.A."/>
            <person name="Mouchard L."/>
            <person name="Reinert K."/>
            <person name="Remington K.A."/>
            <person name="Clark A.G."/>
            <person name="Waterman M.S."/>
            <person name="Eichler E.E."/>
            <person name="Adams M.D."/>
            <person name="Hunkapiller M.W."/>
            <person name="Myers E.W."/>
            <person name="Venter J.C."/>
        </authorList>
    </citation>
    <scope>NUCLEOTIDE SEQUENCE [LARGE SCALE GENOMIC DNA]</scope>
</reference>
<reference key="4">
    <citation type="journal article" date="2004" name="Genome Res.">
        <title>The status, quality, and expansion of the NIH full-length cDNA project: the Mammalian Gene Collection (MGC).</title>
        <authorList>
            <consortium name="The MGC Project Team"/>
        </authorList>
    </citation>
    <scope>NUCLEOTIDE SEQUENCE [LARGE SCALE MRNA]</scope>
    <source>
        <tissue>Lung</tissue>
    </source>
</reference>
<reference key="5">
    <citation type="journal article" date="2013" name="J. Biol. Chem.">
        <title>Silencing of the tandem pore domain halothane-inhibited K+ channel 2 (THIK2) relies on combined intracellular retention and low intrinsic activity at the plasma membrane.</title>
        <authorList>
            <person name="Chatelain F.C."/>
            <person name="Bichet D."/>
            <person name="Feliciangeli S."/>
            <person name="Larroque M.M."/>
            <person name="Braud V.M."/>
            <person name="Douguet D."/>
            <person name="Lesage F."/>
        </authorList>
    </citation>
    <scope>FUNCTION</scope>
    <scope>TRANSPORTER ACTIVITY</scope>
    <scope>ACTIVITY REGULATION</scope>
    <scope>SUBCELLULAR LOCATION</scope>
    <scope>MUTAGENESIS OF SER-136 AND ILE-139</scope>
</reference>
<reference key="6">
    <citation type="journal article" date="2014" name="J. Biol. Chem.">
        <title>Tandem pore domain halothane-inhibited K+ channel subunits THIK1 and THIK2 assemble and form active channels.</title>
        <authorList>
            <person name="Blin S."/>
            <person name="Chatelain F.C."/>
            <person name="Feliciangeli S."/>
            <person name="Kang D."/>
            <person name="Lesage F."/>
            <person name="Bichet D."/>
        </authorList>
    </citation>
    <scope>FUNCTION</scope>
    <scope>TRANSPORTER ACTIVITY</scope>
    <scope>SUBUNIT</scope>
    <scope>INTERACTION WITH KCNK12</scope>
    <scope>SUBCELLULAR LOCATION</scope>
    <scope>MUTAGENESIS OF GLY-112</scope>
</reference>
<reference key="7">
    <citation type="journal article" date="2019" name="J. Mol. Cell. Cardiol.">
        <title>Cloning and characterization of zebrafish K2P13.1 (THIK-1) two-pore-domain K+ channels.</title>
        <authorList>
            <person name="Staudacher I."/>
            <person name="Seehausen S."/>
            <person name="Gierten J."/>
            <person name="Illg C."/>
            <person name="Schweizer P.A."/>
            <person name="Katus H.A."/>
            <person name="Thomas D."/>
        </authorList>
    </citation>
    <scope>FUNCTION</scope>
    <scope>TRANSPORTER ACTIVITY</scope>
    <scope>ACTIVITY REGULATION</scope>
</reference>
<reference key="8">
    <citation type="journal article" date="2024" name="J. Neuroinflamm.">
        <title>Differential contribution of THIK-1 K+ channels and P2X7 receptors to ATP-mediated neuroinflammation by human microglia.</title>
        <authorList>
            <person name="Rifat A."/>
            <person name="Ossola B."/>
            <person name="Buerli R.W."/>
            <person name="Dawson L.A."/>
            <person name="Brice N.L."/>
            <person name="Rowland A."/>
            <person name="Lizio M."/>
            <person name="Xu X."/>
            <person name="Page K."/>
            <person name="Fidzinski P."/>
            <person name="Onken J."/>
            <person name="Holtkamp M."/>
            <person name="Heppner F.L."/>
            <person name="Geiger J.R.P."/>
            <person name="Madry C."/>
        </authorList>
    </citation>
    <scope>FUNCTION</scope>
    <scope>TRANSPORTER ACTIVITY</scope>
    <scope>TISSUE SPECIFICITY</scope>
</reference>
<name>KCNKD_HUMAN</name>